<reference key="1">
    <citation type="journal article" date="2007" name="J. Bacteriol.">
        <title>The complete genome sequence of Campylobacter jejuni strain 81116 (NCTC11828).</title>
        <authorList>
            <person name="Pearson B.M."/>
            <person name="Gaskin D.J.H."/>
            <person name="Segers R.P.A.M."/>
            <person name="Wells J.M."/>
            <person name="Nuijten P.J.M."/>
            <person name="van Vliet A.H.M."/>
        </authorList>
    </citation>
    <scope>NUCLEOTIDE SEQUENCE [LARGE SCALE GENOMIC DNA]</scope>
    <source>
        <strain>81116 / NCTC 11828</strain>
    </source>
</reference>
<keyword id="KW-0963">Cytoplasm</keyword>
<keyword id="KW-0342">GTP-binding</keyword>
<keyword id="KW-0436">Ligase</keyword>
<keyword id="KW-0460">Magnesium</keyword>
<keyword id="KW-0479">Metal-binding</keyword>
<keyword id="KW-0547">Nucleotide-binding</keyword>
<keyword id="KW-0658">Purine biosynthesis</keyword>
<feature type="chain" id="PRO_1000070938" description="Adenylosuccinate synthetase">
    <location>
        <begin position="1"/>
        <end position="416"/>
    </location>
</feature>
<feature type="active site" description="Proton acceptor" evidence="1">
    <location>
        <position position="14"/>
    </location>
</feature>
<feature type="active site" description="Proton donor" evidence="1">
    <location>
        <position position="42"/>
    </location>
</feature>
<feature type="binding site" evidence="1">
    <location>
        <begin position="13"/>
        <end position="19"/>
    </location>
    <ligand>
        <name>GTP</name>
        <dbReference type="ChEBI" id="CHEBI:37565"/>
    </ligand>
</feature>
<feature type="binding site" description="in other chain" evidence="1">
    <location>
        <begin position="14"/>
        <end position="17"/>
    </location>
    <ligand>
        <name>IMP</name>
        <dbReference type="ChEBI" id="CHEBI:58053"/>
        <note>ligand shared between dimeric partners</note>
    </ligand>
</feature>
<feature type="binding site" evidence="1">
    <location>
        <position position="14"/>
    </location>
    <ligand>
        <name>Mg(2+)</name>
        <dbReference type="ChEBI" id="CHEBI:18420"/>
    </ligand>
</feature>
<feature type="binding site" description="in other chain" evidence="1">
    <location>
        <begin position="39"/>
        <end position="42"/>
    </location>
    <ligand>
        <name>IMP</name>
        <dbReference type="ChEBI" id="CHEBI:58053"/>
        <note>ligand shared between dimeric partners</note>
    </ligand>
</feature>
<feature type="binding site" evidence="1">
    <location>
        <begin position="41"/>
        <end position="43"/>
    </location>
    <ligand>
        <name>GTP</name>
        <dbReference type="ChEBI" id="CHEBI:37565"/>
    </ligand>
</feature>
<feature type="binding site" evidence="1">
    <location>
        <position position="41"/>
    </location>
    <ligand>
        <name>Mg(2+)</name>
        <dbReference type="ChEBI" id="CHEBI:18420"/>
    </ligand>
</feature>
<feature type="binding site" description="in other chain" evidence="1">
    <location>
        <position position="126"/>
    </location>
    <ligand>
        <name>IMP</name>
        <dbReference type="ChEBI" id="CHEBI:58053"/>
        <note>ligand shared between dimeric partners</note>
    </ligand>
</feature>
<feature type="binding site" evidence="1">
    <location>
        <position position="140"/>
    </location>
    <ligand>
        <name>IMP</name>
        <dbReference type="ChEBI" id="CHEBI:58053"/>
        <note>ligand shared between dimeric partners</note>
    </ligand>
</feature>
<feature type="binding site" description="in other chain" evidence="1">
    <location>
        <position position="220"/>
    </location>
    <ligand>
        <name>IMP</name>
        <dbReference type="ChEBI" id="CHEBI:58053"/>
        <note>ligand shared between dimeric partners</note>
    </ligand>
</feature>
<feature type="binding site" description="in other chain" evidence="1">
    <location>
        <position position="235"/>
    </location>
    <ligand>
        <name>IMP</name>
        <dbReference type="ChEBI" id="CHEBI:58053"/>
        <note>ligand shared between dimeric partners</note>
    </ligand>
</feature>
<feature type="binding site" evidence="1">
    <location>
        <begin position="295"/>
        <end position="301"/>
    </location>
    <ligand>
        <name>substrate</name>
    </ligand>
</feature>
<feature type="binding site" description="in other chain" evidence="1">
    <location>
        <position position="299"/>
    </location>
    <ligand>
        <name>IMP</name>
        <dbReference type="ChEBI" id="CHEBI:58053"/>
        <note>ligand shared between dimeric partners</note>
    </ligand>
</feature>
<feature type="binding site" evidence="1">
    <location>
        <position position="301"/>
    </location>
    <ligand>
        <name>GTP</name>
        <dbReference type="ChEBI" id="CHEBI:37565"/>
    </ligand>
</feature>
<feature type="binding site" evidence="1">
    <location>
        <begin position="327"/>
        <end position="329"/>
    </location>
    <ligand>
        <name>GTP</name>
        <dbReference type="ChEBI" id="CHEBI:37565"/>
    </ligand>
</feature>
<feature type="binding site" evidence="1">
    <location>
        <begin position="405"/>
        <end position="407"/>
    </location>
    <ligand>
        <name>GTP</name>
        <dbReference type="ChEBI" id="CHEBI:37565"/>
    </ligand>
</feature>
<name>PURA_CAMJ8</name>
<organism>
    <name type="scientific">Campylobacter jejuni subsp. jejuni serotype O:6 (strain 81116 / NCTC 11828)</name>
    <dbReference type="NCBI Taxonomy" id="407148"/>
    <lineage>
        <taxon>Bacteria</taxon>
        <taxon>Pseudomonadati</taxon>
        <taxon>Campylobacterota</taxon>
        <taxon>Epsilonproteobacteria</taxon>
        <taxon>Campylobacterales</taxon>
        <taxon>Campylobacteraceae</taxon>
        <taxon>Campylobacter</taxon>
    </lineage>
</organism>
<comment type="function">
    <text evidence="1">Plays an important role in the de novo pathway of purine nucleotide biosynthesis. Catalyzes the first committed step in the biosynthesis of AMP from IMP.</text>
</comment>
<comment type="catalytic activity">
    <reaction evidence="1">
        <text>IMP + L-aspartate + GTP = N(6)-(1,2-dicarboxyethyl)-AMP + GDP + phosphate + 2 H(+)</text>
        <dbReference type="Rhea" id="RHEA:15753"/>
        <dbReference type="ChEBI" id="CHEBI:15378"/>
        <dbReference type="ChEBI" id="CHEBI:29991"/>
        <dbReference type="ChEBI" id="CHEBI:37565"/>
        <dbReference type="ChEBI" id="CHEBI:43474"/>
        <dbReference type="ChEBI" id="CHEBI:57567"/>
        <dbReference type="ChEBI" id="CHEBI:58053"/>
        <dbReference type="ChEBI" id="CHEBI:58189"/>
        <dbReference type="EC" id="6.3.4.4"/>
    </reaction>
</comment>
<comment type="cofactor">
    <cofactor evidence="1">
        <name>Mg(2+)</name>
        <dbReference type="ChEBI" id="CHEBI:18420"/>
    </cofactor>
    <text evidence="1">Binds 1 Mg(2+) ion per subunit.</text>
</comment>
<comment type="pathway">
    <text evidence="1">Purine metabolism; AMP biosynthesis via de novo pathway; AMP from IMP: step 1/2.</text>
</comment>
<comment type="subunit">
    <text evidence="1">Homodimer.</text>
</comment>
<comment type="subcellular location">
    <subcellularLocation>
        <location evidence="1">Cytoplasm</location>
    </subcellularLocation>
</comment>
<comment type="similarity">
    <text evidence="1">Belongs to the adenylosuccinate synthetase family.</text>
</comment>
<dbReference type="EC" id="6.3.4.4" evidence="1"/>
<dbReference type="EMBL" id="CP000814">
    <property type="protein sequence ID" value="ABV53001.1"/>
    <property type="molecule type" value="Genomic_DNA"/>
</dbReference>
<dbReference type="RefSeq" id="WP_002862151.1">
    <property type="nucleotide sequence ID" value="NC_009839.1"/>
</dbReference>
<dbReference type="SMR" id="A8FNG4"/>
<dbReference type="KEGG" id="cju:C8J_1403"/>
<dbReference type="HOGENOM" id="CLU_029848_0_0_7"/>
<dbReference type="UniPathway" id="UPA00075">
    <property type="reaction ID" value="UER00335"/>
</dbReference>
<dbReference type="GO" id="GO:0005737">
    <property type="term" value="C:cytoplasm"/>
    <property type="evidence" value="ECO:0007669"/>
    <property type="project" value="UniProtKB-SubCell"/>
</dbReference>
<dbReference type="GO" id="GO:0004019">
    <property type="term" value="F:adenylosuccinate synthase activity"/>
    <property type="evidence" value="ECO:0007669"/>
    <property type="project" value="UniProtKB-UniRule"/>
</dbReference>
<dbReference type="GO" id="GO:0005525">
    <property type="term" value="F:GTP binding"/>
    <property type="evidence" value="ECO:0007669"/>
    <property type="project" value="UniProtKB-UniRule"/>
</dbReference>
<dbReference type="GO" id="GO:0000287">
    <property type="term" value="F:magnesium ion binding"/>
    <property type="evidence" value="ECO:0007669"/>
    <property type="project" value="UniProtKB-UniRule"/>
</dbReference>
<dbReference type="GO" id="GO:0044208">
    <property type="term" value="P:'de novo' AMP biosynthetic process"/>
    <property type="evidence" value="ECO:0007669"/>
    <property type="project" value="UniProtKB-UniRule"/>
</dbReference>
<dbReference type="GO" id="GO:0046040">
    <property type="term" value="P:IMP metabolic process"/>
    <property type="evidence" value="ECO:0007669"/>
    <property type="project" value="TreeGrafter"/>
</dbReference>
<dbReference type="CDD" id="cd03108">
    <property type="entry name" value="AdSS"/>
    <property type="match status" value="1"/>
</dbReference>
<dbReference type="FunFam" id="1.10.300.10:FF:000001">
    <property type="entry name" value="Adenylosuccinate synthetase"/>
    <property type="match status" value="1"/>
</dbReference>
<dbReference type="FunFam" id="3.90.170.10:FF:000001">
    <property type="entry name" value="Adenylosuccinate synthetase"/>
    <property type="match status" value="1"/>
</dbReference>
<dbReference type="Gene3D" id="3.40.440.10">
    <property type="entry name" value="Adenylosuccinate Synthetase, subunit A, domain 1"/>
    <property type="match status" value="1"/>
</dbReference>
<dbReference type="Gene3D" id="1.10.300.10">
    <property type="entry name" value="Adenylosuccinate Synthetase, subunit A, domain 2"/>
    <property type="match status" value="1"/>
</dbReference>
<dbReference type="Gene3D" id="3.90.170.10">
    <property type="entry name" value="Adenylosuccinate Synthetase, subunit A, domain 3"/>
    <property type="match status" value="1"/>
</dbReference>
<dbReference type="HAMAP" id="MF_00011">
    <property type="entry name" value="Adenylosucc_synth"/>
    <property type="match status" value="1"/>
</dbReference>
<dbReference type="InterPro" id="IPR018220">
    <property type="entry name" value="Adenylosuccin_syn_GTP-bd"/>
</dbReference>
<dbReference type="InterPro" id="IPR033128">
    <property type="entry name" value="Adenylosuccin_syn_Lys_AS"/>
</dbReference>
<dbReference type="InterPro" id="IPR042109">
    <property type="entry name" value="Adenylosuccinate_synth_dom1"/>
</dbReference>
<dbReference type="InterPro" id="IPR042110">
    <property type="entry name" value="Adenylosuccinate_synth_dom2"/>
</dbReference>
<dbReference type="InterPro" id="IPR042111">
    <property type="entry name" value="Adenylosuccinate_synth_dom3"/>
</dbReference>
<dbReference type="InterPro" id="IPR001114">
    <property type="entry name" value="Adenylosuccinate_synthetase"/>
</dbReference>
<dbReference type="InterPro" id="IPR027417">
    <property type="entry name" value="P-loop_NTPase"/>
</dbReference>
<dbReference type="NCBIfam" id="NF002223">
    <property type="entry name" value="PRK01117.1"/>
    <property type="match status" value="1"/>
</dbReference>
<dbReference type="NCBIfam" id="TIGR00184">
    <property type="entry name" value="purA"/>
    <property type="match status" value="1"/>
</dbReference>
<dbReference type="PANTHER" id="PTHR11846">
    <property type="entry name" value="ADENYLOSUCCINATE SYNTHETASE"/>
    <property type="match status" value="1"/>
</dbReference>
<dbReference type="PANTHER" id="PTHR11846:SF0">
    <property type="entry name" value="ADENYLOSUCCINATE SYNTHETASE"/>
    <property type="match status" value="1"/>
</dbReference>
<dbReference type="Pfam" id="PF00709">
    <property type="entry name" value="Adenylsucc_synt"/>
    <property type="match status" value="1"/>
</dbReference>
<dbReference type="SMART" id="SM00788">
    <property type="entry name" value="Adenylsucc_synt"/>
    <property type="match status" value="1"/>
</dbReference>
<dbReference type="SUPFAM" id="SSF52540">
    <property type="entry name" value="P-loop containing nucleoside triphosphate hydrolases"/>
    <property type="match status" value="1"/>
</dbReference>
<dbReference type="PROSITE" id="PS01266">
    <property type="entry name" value="ADENYLOSUCCIN_SYN_1"/>
    <property type="match status" value="1"/>
</dbReference>
<dbReference type="PROSITE" id="PS00513">
    <property type="entry name" value="ADENYLOSUCCIN_SYN_2"/>
    <property type="match status" value="1"/>
</dbReference>
<proteinExistence type="inferred from homology"/>
<gene>
    <name evidence="1" type="primary">purA</name>
    <name type="ordered locus">C8J_1403</name>
</gene>
<accession>A8FNG4</accession>
<evidence type="ECO:0000255" key="1">
    <source>
        <dbReference type="HAMAP-Rule" id="MF_00011"/>
    </source>
</evidence>
<protein>
    <recommendedName>
        <fullName evidence="1">Adenylosuccinate synthetase</fullName>
        <shortName evidence="1">AMPSase</shortName>
        <shortName evidence="1">AdSS</shortName>
        <ecNumber evidence="1">6.3.4.4</ecNumber>
    </recommendedName>
    <alternativeName>
        <fullName evidence="1">IMP--aspartate ligase</fullName>
    </alternativeName>
</protein>
<sequence length="416" mass="46112">MSKADIIVGIQWGDEGKGKVVDKLCENYDFVCRSAGGHNAGHTIWVNGVRYALHLMPSGVLHPRCINIIGNGVVVSPEVLIAEMAQFENLKGRLYISDRAHLNLKHHSLIDIAKEKLKGKNAIGTTGKGIGPSYADKINRTGHRVGELLEPQRLCEALMKDFEANKTFFEMLEIEIPSAEELLADLKRFNEILTPYITDTTRMLWKALDEDKRVLLEGAQGSMLDIDHGTYPYVTSSSTISAGALTGLGLNPKEAGNIIGIVKAYATRVGNGAFPTEDKGEDGEKIAQIGKEIGVSTGRKRRCGWFDAVAVRYTARLNGLDALSLMKLDVLDGFEKIKICRAYEYKGMEIDYIPSDLENVQPIYEEMDGWDKVFGIKDYDLLPENAKKYIARLEELAGVKVKYISTSPERDDTIIL</sequence>